<protein>
    <recommendedName>
        <fullName>Uncharacterized protein MJ0738</fullName>
    </recommendedName>
</protein>
<organism>
    <name type="scientific">Methanocaldococcus jannaschii (strain ATCC 43067 / DSM 2661 / JAL-1 / JCM 10045 / NBRC 100440)</name>
    <name type="common">Methanococcus jannaschii</name>
    <dbReference type="NCBI Taxonomy" id="243232"/>
    <lineage>
        <taxon>Archaea</taxon>
        <taxon>Methanobacteriati</taxon>
        <taxon>Methanobacteriota</taxon>
        <taxon>Methanomada group</taxon>
        <taxon>Methanococci</taxon>
        <taxon>Methanococcales</taxon>
        <taxon>Methanocaldococcaceae</taxon>
        <taxon>Methanocaldococcus</taxon>
    </lineage>
</organism>
<keyword id="KW-1185">Reference proteome</keyword>
<sequence>MMITTNHPLYEALRDIQEFKLRLVEYFKDKDVFPIKNKVELAEALPCGISLPCGEIEAAELVKLLTDNDFPIKDPEDLAMKLANKCPIKQ</sequence>
<reference key="1">
    <citation type="journal article" date="1996" name="Science">
        <title>Complete genome sequence of the methanogenic archaeon, Methanococcus jannaschii.</title>
        <authorList>
            <person name="Bult C.J."/>
            <person name="White O."/>
            <person name="Olsen G.J."/>
            <person name="Zhou L."/>
            <person name="Fleischmann R.D."/>
            <person name="Sutton G.G."/>
            <person name="Blake J.A."/>
            <person name="FitzGerald L.M."/>
            <person name="Clayton R.A."/>
            <person name="Gocayne J.D."/>
            <person name="Kerlavage A.R."/>
            <person name="Dougherty B.A."/>
            <person name="Tomb J.-F."/>
            <person name="Adams M.D."/>
            <person name="Reich C.I."/>
            <person name="Overbeek R."/>
            <person name="Kirkness E.F."/>
            <person name="Weinstock K.G."/>
            <person name="Merrick J.M."/>
            <person name="Glodek A."/>
            <person name="Scott J.L."/>
            <person name="Geoghagen N.S.M."/>
            <person name="Weidman J.F."/>
            <person name="Fuhrmann J.L."/>
            <person name="Nguyen D."/>
            <person name="Utterback T.R."/>
            <person name="Kelley J.M."/>
            <person name="Peterson J.D."/>
            <person name="Sadow P.W."/>
            <person name="Hanna M.C."/>
            <person name="Cotton M.D."/>
            <person name="Roberts K.M."/>
            <person name="Hurst M.A."/>
            <person name="Kaine B.P."/>
            <person name="Borodovsky M."/>
            <person name="Klenk H.-P."/>
            <person name="Fraser C.M."/>
            <person name="Smith H.O."/>
            <person name="Woese C.R."/>
            <person name="Venter J.C."/>
        </authorList>
    </citation>
    <scope>NUCLEOTIDE SEQUENCE [LARGE SCALE GENOMIC DNA]</scope>
    <source>
        <strain>ATCC 43067 / DSM 2661 / JAL-1 / JCM 10045 / NBRC 100440</strain>
    </source>
</reference>
<dbReference type="EMBL" id="L77117">
    <property type="protein sequence ID" value="AAB98733.1"/>
    <property type="molecule type" value="Genomic_DNA"/>
</dbReference>
<dbReference type="PIR" id="B64392">
    <property type="entry name" value="B64392"/>
</dbReference>
<dbReference type="SMR" id="Q58148"/>
<dbReference type="STRING" id="243232.MJ_0738"/>
<dbReference type="PaxDb" id="243232-MJ_0738"/>
<dbReference type="EnsemblBacteria" id="AAB98733">
    <property type="protein sequence ID" value="AAB98733"/>
    <property type="gene ID" value="MJ_0738"/>
</dbReference>
<dbReference type="KEGG" id="mja:MJ_0738"/>
<dbReference type="eggNOG" id="arCOG02797">
    <property type="taxonomic scope" value="Archaea"/>
</dbReference>
<dbReference type="HOGENOM" id="CLU_2366171_0_0_2"/>
<dbReference type="InParanoid" id="Q58148"/>
<dbReference type="Proteomes" id="UP000000805">
    <property type="component" value="Chromosome"/>
</dbReference>
<dbReference type="Gene3D" id="1.10.238.80">
    <property type="entry name" value="MTH865-like"/>
    <property type="match status" value="1"/>
</dbReference>
<dbReference type="InterPro" id="IPR036825">
    <property type="entry name" value="MTH865-like_sf"/>
</dbReference>
<dbReference type="InterPro" id="IPR024093">
    <property type="entry name" value="Uncharacterised_MTH865"/>
</dbReference>
<dbReference type="Pfam" id="PF07747">
    <property type="entry name" value="MTH865"/>
    <property type="match status" value="1"/>
</dbReference>
<dbReference type="SUPFAM" id="SSF69025">
    <property type="entry name" value="Hypothetical protein MTH865"/>
    <property type="match status" value="1"/>
</dbReference>
<feature type="chain" id="PRO_0000107009" description="Uncharacterized protein MJ0738">
    <location>
        <begin position="1"/>
        <end position="90"/>
    </location>
</feature>
<name>Y738_METJA</name>
<gene>
    <name type="ordered locus">MJ0738</name>
</gene>
<accession>Q58148</accession>
<proteinExistence type="predicted"/>